<gene>
    <name evidence="1" type="primary">dapE</name>
    <name type="ordered locus">Bpro_1994</name>
</gene>
<proteinExistence type="inferred from homology"/>
<sequence>MSATLRLTEQLISRPSVTPLDEGCIDLLSARLGALGFVCERMDSGPDSFRVVNLWAKREGFNPLAQENRGQSATKSAANEGEAHTTPIKTLVFAGHTDVVPTGPLEQWHSHPFTPSHRNGVLYGRGAADMKTSIAAMVVAVEEFLAAHPQPGLSIAFLLTSDEEGPATDGTVVVCKQLKARGEVLDYCIVGEPTSVSHLGDMIKNGRRGTMSGKLTIKGVQGHIAYPHLARNPVHLFAPALAQLVATEWDQGNAFFPATSWQVSNMHGGTGASNVIPGELVVDFNFRFCTESTPENLQQRLQAILDQHELDYDLKWTVGGLPFLTTPGELVNAVRGAIHAETGLDTELSTTGGTSDGRFIAKVCPQVIEFGPLNATIHKINECVDVSSLDPLKNIYKGVLERLAGISGMAGASGLAAVADSTSSP</sequence>
<keyword id="KW-0028">Amino-acid biosynthesis</keyword>
<keyword id="KW-0170">Cobalt</keyword>
<keyword id="KW-0220">Diaminopimelate biosynthesis</keyword>
<keyword id="KW-0378">Hydrolase</keyword>
<keyword id="KW-0457">Lysine biosynthesis</keyword>
<keyword id="KW-0479">Metal-binding</keyword>
<keyword id="KW-1185">Reference proteome</keyword>
<keyword id="KW-0862">Zinc</keyword>
<reference key="1">
    <citation type="journal article" date="2008" name="Appl. Environ. Microbiol.">
        <title>The genome of Polaromonas sp. strain JS666: insights into the evolution of a hydrocarbon- and xenobiotic-degrading bacterium, and features of relevance to biotechnology.</title>
        <authorList>
            <person name="Mattes T.E."/>
            <person name="Alexander A.K."/>
            <person name="Richardson P.M."/>
            <person name="Munk A.C."/>
            <person name="Han C.S."/>
            <person name="Stothard P."/>
            <person name="Coleman N.V."/>
        </authorList>
    </citation>
    <scope>NUCLEOTIDE SEQUENCE [LARGE SCALE GENOMIC DNA]</scope>
    <source>
        <strain>JS666 / ATCC BAA-500</strain>
    </source>
</reference>
<protein>
    <recommendedName>
        <fullName evidence="1">Succinyl-diaminopimelate desuccinylase</fullName>
        <shortName evidence="1">SDAP desuccinylase</shortName>
        <ecNumber evidence="1">3.5.1.18</ecNumber>
    </recommendedName>
    <alternativeName>
        <fullName evidence="1">N-succinyl-LL-2,6-diaminoheptanedioate amidohydrolase</fullName>
    </alternativeName>
</protein>
<comment type="function">
    <text evidence="1">Catalyzes the hydrolysis of N-succinyl-L,L-diaminopimelic acid (SDAP), forming succinate and LL-2,6-diaminopimelate (DAP), an intermediate involved in the bacterial biosynthesis of lysine and meso-diaminopimelic acid, an essential component of bacterial cell walls.</text>
</comment>
<comment type="catalytic activity">
    <reaction evidence="1">
        <text>N-succinyl-(2S,6S)-2,6-diaminopimelate + H2O = (2S,6S)-2,6-diaminopimelate + succinate</text>
        <dbReference type="Rhea" id="RHEA:22608"/>
        <dbReference type="ChEBI" id="CHEBI:15377"/>
        <dbReference type="ChEBI" id="CHEBI:30031"/>
        <dbReference type="ChEBI" id="CHEBI:57609"/>
        <dbReference type="ChEBI" id="CHEBI:58087"/>
        <dbReference type="EC" id="3.5.1.18"/>
    </reaction>
</comment>
<comment type="cofactor">
    <cofactor evidence="1">
        <name>Zn(2+)</name>
        <dbReference type="ChEBI" id="CHEBI:29105"/>
    </cofactor>
    <cofactor evidence="1">
        <name>Co(2+)</name>
        <dbReference type="ChEBI" id="CHEBI:48828"/>
    </cofactor>
    <text evidence="1">Binds 2 Zn(2+) or Co(2+) ions per subunit.</text>
</comment>
<comment type="pathway">
    <text evidence="1">Amino-acid biosynthesis; L-lysine biosynthesis via DAP pathway; LL-2,6-diaminopimelate from (S)-tetrahydrodipicolinate (succinylase route): step 3/3.</text>
</comment>
<comment type="subunit">
    <text evidence="1">Homodimer.</text>
</comment>
<comment type="similarity">
    <text evidence="1">Belongs to the peptidase M20A family. DapE subfamily.</text>
</comment>
<name>DAPE_POLSJ</name>
<dbReference type="EC" id="3.5.1.18" evidence="1"/>
<dbReference type="EMBL" id="CP000316">
    <property type="protein sequence ID" value="ABE43924.1"/>
    <property type="molecule type" value="Genomic_DNA"/>
</dbReference>
<dbReference type="RefSeq" id="WP_011482923.1">
    <property type="nucleotide sequence ID" value="NC_007948.1"/>
</dbReference>
<dbReference type="SMR" id="Q12C18"/>
<dbReference type="STRING" id="296591.Bpro_1994"/>
<dbReference type="KEGG" id="pol:Bpro_1994"/>
<dbReference type="eggNOG" id="COG0624">
    <property type="taxonomic scope" value="Bacteria"/>
</dbReference>
<dbReference type="HOGENOM" id="CLU_021802_4_0_4"/>
<dbReference type="OrthoDB" id="9809784at2"/>
<dbReference type="UniPathway" id="UPA00034">
    <property type="reaction ID" value="UER00021"/>
</dbReference>
<dbReference type="Proteomes" id="UP000001983">
    <property type="component" value="Chromosome"/>
</dbReference>
<dbReference type="GO" id="GO:0008777">
    <property type="term" value="F:acetylornithine deacetylase activity"/>
    <property type="evidence" value="ECO:0007669"/>
    <property type="project" value="TreeGrafter"/>
</dbReference>
<dbReference type="GO" id="GO:0050897">
    <property type="term" value="F:cobalt ion binding"/>
    <property type="evidence" value="ECO:0007669"/>
    <property type="project" value="UniProtKB-UniRule"/>
</dbReference>
<dbReference type="GO" id="GO:0009014">
    <property type="term" value="F:succinyl-diaminopimelate desuccinylase activity"/>
    <property type="evidence" value="ECO:0007669"/>
    <property type="project" value="UniProtKB-UniRule"/>
</dbReference>
<dbReference type="GO" id="GO:0008270">
    <property type="term" value="F:zinc ion binding"/>
    <property type="evidence" value="ECO:0007669"/>
    <property type="project" value="UniProtKB-UniRule"/>
</dbReference>
<dbReference type="GO" id="GO:0019877">
    <property type="term" value="P:diaminopimelate biosynthetic process"/>
    <property type="evidence" value="ECO:0007669"/>
    <property type="project" value="UniProtKB-UniRule"/>
</dbReference>
<dbReference type="GO" id="GO:0006526">
    <property type="term" value="P:L-arginine biosynthetic process"/>
    <property type="evidence" value="ECO:0007669"/>
    <property type="project" value="TreeGrafter"/>
</dbReference>
<dbReference type="GO" id="GO:0009089">
    <property type="term" value="P:lysine biosynthetic process via diaminopimelate"/>
    <property type="evidence" value="ECO:0007669"/>
    <property type="project" value="UniProtKB-UniRule"/>
</dbReference>
<dbReference type="CDD" id="cd03891">
    <property type="entry name" value="M20_DapE_proteobac"/>
    <property type="match status" value="1"/>
</dbReference>
<dbReference type="FunFam" id="3.30.70.360:FF:000011">
    <property type="entry name" value="Succinyl-diaminopimelate desuccinylase"/>
    <property type="match status" value="1"/>
</dbReference>
<dbReference type="Gene3D" id="3.40.630.10">
    <property type="entry name" value="Zn peptidases"/>
    <property type="match status" value="2"/>
</dbReference>
<dbReference type="HAMAP" id="MF_01690">
    <property type="entry name" value="DapE"/>
    <property type="match status" value="1"/>
</dbReference>
<dbReference type="InterPro" id="IPR036264">
    <property type="entry name" value="Bact_exopeptidase_dim_dom"/>
</dbReference>
<dbReference type="InterPro" id="IPR005941">
    <property type="entry name" value="DapE_proteobac"/>
</dbReference>
<dbReference type="InterPro" id="IPR002933">
    <property type="entry name" value="Peptidase_M20"/>
</dbReference>
<dbReference type="InterPro" id="IPR011650">
    <property type="entry name" value="Peptidase_M20_dimer"/>
</dbReference>
<dbReference type="InterPro" id="IPR050072">
    <property type="entry name" value="Peptidase_M20A"/>
</dbReference>
<dbReference type="NCBIfam" id="TIGR01246">
    <property type="entry name" value="dapE_proteo"/>
    <property type="match status" value="1"/>
</dbReference>
<dbReference type="NCBIfam" id="NF009557">
    <property type="entry name" value="PRK13009.1"/>
    <property type="match status" value="1"/>
</dbReference>
<dbReference type="PANTHER" id="PTHR43808">
    <property type="entry name" value="ACETYLORNITHINE DEACETYLASE"/>
    <property type="match status" value="1"/>
</dbReference>
<dbReference type="PANTHER" id="PTHR43808:SF31">
    <property type="entry name" value="N-ACETYL-L-CITRULLINE DEACETYLASE"/>
    <property type="match status" value="1"/>
</dbReference>
<dbReference type="Pfam" id="PF07687">
    <property type="entry name" value="M20_dimer"/>
    <property type="match status" value="1"/>
</dbReference>
<dbReference type="Pfam" id="PF01546">
    <property type="entry name" value="Peptidase_M20"/>
    <property type="match status" value="1"/>
</dbReference>
<dbReference type="SUPFAM" id="SSF55031">
    <property type="entry name" value="Bacterial exopeptidase dimerisation domain"/>
    <property type="match status" value="1"/>
</dbReference>
<dbReference type="SUPFAM" id="SSF53187">
    <property type="entry name" value="Zn-dependent exopeptidases"/>
    <property type="match status" value="1"/>
</dbReference>
<feature type="chain" id="PRO_0000375647" description="Succinyl-diaminopimelate desuccinylase">
    <location>
        <begin position="1"/>
        <end position="425"/>
    </location>
</feature>
<feature type="active site" evidence="1">
    <location>
        <position position="98"/>
    </location>
</feature>
<feature type="active site" description="Proton acceptor" evidence="1">
    <location>
        <position position="163"/>
    </location>
</feature>
<feature type="binding site" evidence="1">
    <location>
        <position position="96"/>
    </location>
    <ligand>
        <name>Zn(2+)</name>
        <dbReference type="ChEBI" id="CHEBI:29105"/>
        <label>1</label>
    </ligand>
</feature>
<feature type="binding site" evidence="1">
    <location>
        <position position="129"/>
    </location>
    <ligand>
        <name>Zn(2+)</name>
        <dbReference type="ChEBI" id="CHEBI:29105"/>
        <label>1</label>
    </ligand>
</feature>
<feature type="binding site" evidence="1">
    <location>
        <position position="129"/>
    </location>
    <ligand>
        <name>Zn(2+)</name>
        <dbReference type="ChEBI" id="CHEBI:29105"/>
        <label>2</label>
    </ligand>
</feature>
<feature type="binding site" evidence="1">
    <location>
        <position position="164"/>
    </location>
    <ligand>
        <name>Zn(2+)</name>
        <dbReference type="ChEBI" id="CHEBI:29105"/>
        <label>2</label>
    </ligand>
</feature>
<feature type="binding site" evidence="1">
    <location>
        <position position="192"/>
    </location>
    <ligand>
        <name>Zn(2+)</name>
        <dbReference type="ChEBI" id="CHEBI:29105"/>
        <label>1</label>
    </ligand>
</feature>
<feature type="binding site" evidence="1">
    <location>
        <position position="378"/>
    </location>
    <ligand>
        <name>Zn(2+)</name>
        <dbReference type="ChEBI" id="CHEBI:29105"/>
        <label>2</label>
    </ligand>
</feature>
<evidence type="ECO:0000255" key="1">
    <source>
        <dbReference type="HAMAP-Rule" id="MF_01690"/>
    </source>
</evidence>
<accession>Q12C18</accession>
<organism>
    <name type="scientific">Polaromonas sp. (strain JS666 / ATCC BAA-500)</name>
    <dbReference type="NCBI Taxonomy" id="296591"/>
    <lineage>
        <taxon>Bacteria</taxon>
        <taxon>Pseudomonadati</taxon>
        <taxon>Pseudomonadota</taxon>
        <taxon>Betaproteobacteria</taxon>
        <taxon>Burkholderiales</taxon>
        <taxon>Comamonadaceae</taxon>
        <taxon>Polaromonas</taxon>
    </lineage>
</organism>